<accession>A0A179H0I3</accession>
<proteinExistence type="evidence at transcript level"/>
<protein>
    <recommendedName>
        <fullName evidence="5">Thioesterase lcsJ</fullName>
        <ecNumber evidence="7">2.3.1.-</ecNumber>
    </recommendedName>
    <alternativeName>
        <fullName evidence="5">Leucinostatins biosynthesis cluster protein J</fullName>
    </alternativeName>
</protein>
<reference key="1">
    <citation type="journal article" date="2016" name="Front. Microbiol.">
        <title>Genome and transcriptome sequences reveal the specific parasitism of the nematophagous Purpureocillium lilacinum 36-1.</title>
        <authorList>
            <person name="Xie J."/>
            <person name="Li S."/>
            <person name="Mo C."/>
            <person name="Xiao X."/>
            <person name="Peng D."/>
            <person name="Wang G."/>
            <person name="Xiao Y."/>
        </authorList>
    </citation>
    <scope>NUCLEOTIDE SEQUENCE [LARGE SCALE GENOMIC DNA]</scope>
    <source>
        <strain>36-1</strain>
    </source>
</reference>
<reference key="2">
    <citation type="journal article" date="2016" name="PLoS Pathog.">
        <title>Biosynthesis of antibiotic leucinostatins in bio-control fungus Purpureocillium lilacinum and their inhibition on phytophthora revealed by genome mining.</title>
        <authorList>
            <person name="Wang G."/>
            <person name="Liu Z."/>
            <person name="Lin R."/>
            <person name="Li E."/>
            <person name="Mao Z."/>
            <person name="Ling J."/>
            <person name="Yang Y."/>
            <person name="Yin W.B."/>
            <person name="Xie B."/>
        </authorList>
    </citation>
    <scope>NUCLEOTIDE SEQUENCE [LARGE SCALE GENOMIC DNA]</scope>
    <scope>IDENTIFICATION</scope>
    <scope>FUNCTION</scope>
    <scope>INDUCTION</scope>
    <scope>PATHWAY</scope>
    <source>
        <strain>PLBJ-1</strain>
    </source>
</reference>
<evidence type="ECO:0000255" key="1"/>
<evidence type="ECO:0000255" key="2">
    <source>
        <dbReference type="PROSITE-ProRule" id="PRU00498"/>
    </source>
</evidence>
<evidence type="ECO:0000256" key="3">
    <source>
        <dbReference type="SAM" id="MobiDB-lite"/>
    </source>
</evidence>
<evidence type="ECO:0000269" key="4">
    <source>
    </source>
</evidence>
<evidence type="ECO:0000303" key="5">
    <source>
    </source>
</evidence>
<evidence type="ECO:0000305" key="6"/>
<evidence type="ECO:0000305" key="7">
    <source>
    </source>
</evidence>
<gene>
    <name evidence="5" type="primary">lcsJ</name>
    <name type="ORF">PCL_01827</name>
    <name type="ORF">VFPBJ_02524</name>
    <name type="ORF">VFPFJ_04696</name>
</gene>
<name>LCSJ_PURLI</name>
<organism>
    <name type="scientific">Purpureocillium lilacinum</name>
    <name type="common">Paecilomyces lilacinus</name>
    <dbReference type="NCBI Taxonomy" id="33203"/>
    <lineage>
        <taxon>Eukaryota</taxon>
        <taxon>Fungi</taxon>
        <taxon>Dikarya</taxon>
        <taxon>Ascomycota</taxon>
        <taxon>Pezizomycotina</taxon>
        <taxon>Sordariomycetes</taxon>
        <taxon>Hypocreomycetidae</taxon>
        <taxon>Hypocreales</taxon>
        <taxon>Ophiocordycipitaceae</taxon>
        <taxon>Purpureocillium</taxon>
    </lineage>
</organism>
<dbReference type="EC" id="2.3.1.-" evidence="7"/>
<dbReference type="EMBL" id="LSBH01000002">
    <property type="protein sequence ID" value="OAQ83756.1"/>
    <property type="molecule type" value="Genomic_DNA"/>
</dbReference>
<dbReference type="EMBL" id="LSBI01000004">
    <property type="protein sequence ID" value="OAQ90536.1"/>
    <property type="molecule type" value="Genomic_DNA"/>
</dbReference>
<dbReference type="EMBL" id="LCWV01000014">
    <property type="protein sequence ID" value="PWI68738.1"/>
    <property type="molecule type" value="Genomic_DNA"/>
</dbReference>
<dbReference type="RefSeq" id="XP_018179255.1">
    <property type="nucleotide sequence ID" value="XM_018321776.1"/>
</dbReference>
<dbReference type="SMR" id="A0A179H0I3"/>
<dbReference type="GlyCosmos" id="A0A179H0I3">
    <property type="glycosylation" value="1 site, No reported glycans"/>
</dbReference>
<dbReference type="GeneID" id="28886825"/>
<dbReference type="KEGG" id="plj:28886825"/>
<dbReference type="OMA" id="APAWPMD"/>
<dbReference type="Proteomes" id="UP000078240">
    <property type="component" value="Unassembled WGS sequence"/>
</dbReference>
<dbReference type="Proteomes" id="UP000078340">
    <property type="component" value="Unassembled WGS sequence"/>
</dbReference>
<dbReference type="Proteomes" id="UP000245956">
    <property type="component" value="Unassembled WGS sequence"/>
</dbReference>
<dbReference type="GO" id="GO:0016020">
    <property type="term" value="C:membrane"/>
    <property type="evidence" value="ECO:0007669"/>
    <property type="project" value="UniProtKB-SubCell"/>
</dbReference>
<dbReference type="GO" id="GO:0016740">
    <property type="term" value="F:transferase activity"/>
    <property type="evidence" value="ECO:0007669"/>
    <property type="project" value="UniProtKB-KW"/>
</dbReference>
<dbReference type="InterPro" id="IPR029069">
    <property type="entry name" value="HotDog_dom_sf"/>
</dbReference>
<dbReference type="InterPro" id="IPR051490">
    <property type="entry name" value="THEM6_lcsJ_thioesterase"/>
</dbReference>
<dbReference type="PANTHER" id="PTHR12475">
    <property type="match status" value="1"/>
</dbReference>
<dbReference type="PANTHER" id="PTHR12475:SF4">
    <property type="entry name" value="PROTEIN THEM6"/>
    <property type="match status" value="1"/>
</dbReference>
<dbReference type="Pfam" id="PF13279">
    <property type="entry name" value="4HBT_2"/>
    <property type="match status" value="1"/>
</dbReference>
<dbReference type="SUPFAM" id="SSF54637">
    <property type="entry name" value="Thioesterase/thiol ester dehydrase-isomerase"/>
    <property type="match status" value="1"/>
</dbReference>
<feature type="chain" id="PRO_0000446615" description="Thioesterase lcsJ">
    <location>
        <begin position="1"/>
        <end position="309"/>
    </location>
</feature>
<feature type="transmembrane region" description="Helical" evidence="1">
    <location>
        <begin position="11"/>
        <end position="31"/>
    </location>
</feature>
<feature type="region of interest" description="Disordered" evidence="3">
    <location>
        <begin position="61"/>
        <end position="83"/>
    </location>
</feature>
<feature type="region of interest" description="Disordered" evidence="3">
    <location>
        <begin position="239"/>
        <end position="275"/>
    </location>
</feature>
<feature type="compositionally biased region" description="Polar residues" evidence="3">
    <location>
        <begin position="248"/>
        <end position="260"/>
    </location>
</feature>
<feature type="glycosylation site" description="N-linked (GlcNAc...) asparagine" evidence="2">
    <location>
        <position position="112"/>
    </location>
</feature>
<keyword id="KW-0325">Glycoprotein</keyword>
<keyword id="KW-0472">Membrane</keyword>
<keyword id="KW-1185">Reference proteome</keyword>
<keyword id="KW-0808">Transferase</keyword>
<keyword id="KW-0812">Transmembrane</keyword>
<keyword id="KW-1133">Transmembrane helix</keyword>
<sequence>MDRPQWPGGLIAQVHGFVFSWWGVILLLAIINLKSFPGIWTIRALYHMKSSFNGQLRQTVASPTAENAQRRVPKTPKTGATDTIDHHPLFQPEIISSHVSPAEIDFNMHKSNSTYFTDLDISRIKLVGRIMAPAWPLDRMHVEYKGRDGEMKRERVKGRPALALGATCTSFKREMKVLARYDVESRILGWDSRWLYIGSWFVSRKGGKGKEQLFASSLSKYIVKKGRITVRPEQFLTESGWIPPRPESTGNSKSLDSLQANGHGATENGKHDAKDTWTWEEIESHRLKGMTTVGGWADADLRLEQAYSS</sequence>
<comment type="function">
    <text evidence="4 7">Thioesterase; part of the gene cluster that mediates the biosynthesis of the lipopeptide antibiotics leucinostatins that show extensive biological activities, including antimalarial, antiviral, antibacterial, antifungal, and antitumor activities, as well as phytotoxic (PubMed:27416025). Leucinostatin A contains nine amino acid residues, including the unusual amino acid 4-methyl-L-proline (MePro), 2-amino-6-hydroxy-4-methyl-8-oxodecanoic acid (AHyMeOA), 3-hydroxyleucine (HyLeu), alpha-aminoisobutyric acid (AIB), beta-Ala, a 4-methylhex-2-enoic acid at the N-terminus as well as a N1,N1-dimethylpropane-1,2-diamine (DPD) at the C-terminus (Probable). The biosynthesis of leucinostatins is probably initiated with the assembly of 4-methylhex-2-enoic acid by a reducing PKS. Two reducing polyketide synthases, lcsB and lcsC, have been identified in the cluster and it is not clear which is the one that assembles 4-methylhex-2-enoic acid since both contain KS, AT, DH, cMT, ER, KR and ACP domains (Probable). The polyketide residue might be transferred to the NRPS lcsA, mediated by two additional enzymes, the acyl-CoA ligase lcsD and the thioesterase lcsE. The linear polyketide carboxylic acid, which is released from PKS, is converted to a CoA thioester by lcsD, and then lcsE hydrolyzes the thiol bond and shuttles the polyketide intermediate to lcsA (Probable). The C domain of the first module catalyzed the condensation of 4-methylhex-2-enoic acid and MePro carried by domain A1, followed by successive condensations of nine amino acids to trigger the elongation of the linear peptide. A5 and A6 domains of lcsA are proposed to incorporate leucine, A2 AHyMeOA, and A3 incorporates HyLeu. A4, A7 and A8 incorporate AIB (Probable). The AHyMeOA in leucinostatin A activated by the A2 might be produced by the second PKS (lcsB or lcsC) present within the cluster (Probable). The MePro is probably produced via leucine cyclization and may originate from a separate pathway, independent of the cluster. Another nonproteinogenic amino acid, beta-Ala, could be produced by an aspartic acid decarboxylase also localized outside of the cluster. Two candidates are VFPBJ_01400 and VFPBJ_10476 (Probable). The final peptide scaffold may be released by the NAD(P)H-dependent thioester reductase (TE) at the C-terminal region of lcsA (Probable). Transamination of the lcsA product by the transaminase lcsP may produce DPD at the C-terminus (Probable). Further hydroxylation steps performed alternatively by the cytochrome P450 monooxygenases lcsI, lcsK and lcsN then yield the non-methylated leucinostatins precursor. It is also possible that leucines can be hydroxylated prior to their incorporation into the peptide (Probable). Varying extents of methylation then lead to the formation of leucinostatins A and B (Probable).</text>
</comment>
<comment type="pathway">
    <text evidence="7">Secondary metabolite biosynthesis.</text>
</comment>
<comment type="subcellular location">
    <subcellularLocation>
        <location evidence="1">Membrane</location>
        <topology evidence="1">Single-pass membrane protein</topology>
    </subcellularLocation>
</comment>
<comment type="induction">
    <text evidence="4">Expression is positively regulated by the leucinostatins biosynthesis cluster-specific transcription regulator lcsF.</text>
</comment>
<comment type="similarity">
    <text evidence="6">Belongs to the lcsJ thioesterase family.</text>
</comment>